<evidence type="ECO:0000250" key="1">
    <source>
        <dbReference type="UniProtKB" id="P20839"/>
    </source>
</evidence>
<evidence type="ECO:0000250" key="2">
    <source>
        <dbReference type="UniProtKB" id="P50096"/>
    </source>
</evidence>
<evidence type="ECO:0000255" key="3">
    <source>
        <dbReference type="HAMAP-Rule" id="MF_03156"/>
    </source>
</evidence>
<evidence type="ECO:0000305" key="4"/>
<accession>A0JNA3</accession>
<dbReference type="EC" id="1.1.1.205" evidence="3"/>
<dbReference type="EMBL" id="DAAA02011497">
    <property type="status" value="NOT_ANNOTATED_CDS"/>
    <property type="molecule type" value="Genomic_DNA"/>
</dbReference>
<dbReference type="EMBL" id="BC126584">
    <property type="protein sequence ID" value="AAI26585.1"/>
    <property type="status" value="ALT_INIT"/>
    <property type="molecule type" value="mRNA"/>
</dbReference>
<dbReference type="RefSeq" id="NP_001071309.1">
    <property type="nucleotide sequence ID" value="NM_001077841.2"/>
</dbReference>
<dbReference type="SMR" id="A0JNA3"/>
<dbReference type="FunCoup" id="A0JNA3">
    <property type="interactions" value="393"/>
</dbReference>
<dbReference type="STRING" id="9913.ENSBTAP00000000374"/>
<dbReference type="PaxDb" id="9913-ENSBTAP00000000374"/>
<dbReference type="GeneID" id="504305"/>
<dbReference type="KEGG" id="bta:504305"/>
<dbReference type="CTD" id="3614"/>
<dbReference type="VEuPathDB" id="HostDB:ENSBTAG00000000296"/>
<dbReference type="eggNOG" id="KOG2550">
    <property type="taxonomic scope" value="Eukaryota"/>
</dbReference>
<dbReference type="HOGENOM" id="CLU_022552_2_1_1"/>
<dbReference type="InParanoid" id="A0JNA3"/>
<dbReference type="OrthoDB" id="416622at2759"/>
<dbReference type="TreeFam" id="TF300378"/>
<dbReference type="Reactome" id="R-BTA-6798695">
    <property type="pathway name" value="Neutrophil degranulation"/>
</dbReference>
<dbReference type="Reactome" id="R-BTA-73817">
    <property type="pathway name" value="Purine ribonucleoside monophosphate biosynthesis"/>
</dbReference>
<dbReference type="Reactome" id="R-BTA-9748787">
    <property type="pathway name" value="Azathioprine ADME"/>
</dbReference>
<dbReference type="UniPathway" id="UPA00601">
    <property type="reaction ID" value="UER00295"/>
</dbReference>
<dbReference type="Proteomes" id="UP000009136">
    <property type="component" value="Chromosome 4"/>
</dbReference>
<dbReference type="Bgee" id="ENSBTAG00000000296">
    <property type="expression patterns" value="Expressed in retina and 104 other cell types or tissues"/>
</dbReference>
<dbReference type="GO" id="GO:0005737">
    <property type="term" value="C:cytoplasm"/>
    <property type="evidence" value="ECO:0000318"/>
    <property type="project" value="GO_Central"/>
</dbReference>
<dbReference type="GO" id="GO:0005634">
    <property type="term" value="C:nucleus"/>
    <property type="evidence" value="ECO:0007669"/>
    <property type="project" value="UniProtKB-SubCell"/>
</dbReference>
<dbReference type="GO" id="GO:0003938">
    <property type="term" value="F:IMP dehydrogenase activity"/>
    <property type="evidence" value="ECO:0000318"/>
    <property type="project" value="GO_Central"/>
</dbReference>
<dbReference type="GO" id="GO:0046872">
    <property type="term" value="F:metal ion binding"/>
    <property type="evidence" value="ECO:0007669"/>
    <property type="project" value="UniProtKB-UniRule"/>
</dbReference>
<dbReference type="GO" id="GO:0000166">
    <property type="term" value="F:nucleotide binding"/>
    <property type="evidence" value="ECO:0007669"/>
    <property type="project" value="UniProtKB-UniRule"/>
</dbReference>
<dbReference type="GO" id="GO:0006177">
    <property type="term" value="P:GMP biosynthetic process"/>
    <property type="evidence" value="ECO:0007669"/>
    <property type="project" value="UniProtKB-UniRule"/>
</dbReference>
<dbReference type="GO" id="GO:0006183">
    <property type="term" value="P:GTP biosynthetic process"/>
    <property type="evidence" value="ECO:0000318"/>
    <property type="project" value="GO_Central"/>
</dbReference>
<dbReference type="CDD" id="cd04601">
    <property type="entry name" value="CBS_pair_IMPDH"/>
    <property type="match status" value="1"/>
</dbReference>
<dbReference type="CDD" id="cd00381">
    <property type="entry name" value="IMPDH"/>
    <property type="match status" value="1"/>
</dbReference>
<dbReference type="FunFam" id="3.20.20.70:FF:000007">
    <property type="entry name" value="Chromosome 19 SCAF14664, whole genome shotgun sequence"/>
    <property type="match status" value="1"/>
</dbReference>
<dbReference type="Gene3D" id="3.20.20.70">
    <property type="entry name" value="Aldolase class I"/>
    <property type="match status" value="1"/>
</dbReference>
<dbReference type="HAMAP" id="MF_01964">
    <property type="entry name" value="IMPDH"/>
    <property type="match status" value="1"/>
</dbReference>
<dbReference type="InterPro" id="IPR013785">
    <property type="entry name" value="Aldolase_TIM"/>
</dbReference>
<dbReference type="InterPro" id="IPR000644">
    <property type="entry name" value="CBS_dom"/>
</dbReference>
<dbReference type="InterPro" id="IPR005990">
    <property type="entry name" value="IMP_DH"/>
</dbReference>
<dbReference type="InterPro" id="IPR015875">
    <property type="entry name" value="IMP_DH/GMP_Rdtase_CS"/>
</dbReference>
<dbReference type="InterPro" id="IPR001093">
    <property type="entry name" value="IMP_DH_GMPRt"/>
</dbReference>
<dbReference type="NCBIfam" id="TIGR01302">
    <property type="entry name" value="IMP_dehydrog"/>
    <property type="match status" value="1"/>
</dbReference>
<dbReference type="PANTHER" id="PTHR11911:SF74">
    <property type="entry name" value="INOSINE-5'-MONOPHOSPHATE DEHYDROGENASE 1"/>
    <property type="match status" value="1"/>
</dbReference>
<dbReference type="PANTHER" id="PTHR11911">
    <property type="entry name" value="INOSINE-5-MONOPHOSPHATE DEHYDROGENASE RELATED"/>
    <property type="match status" value="1"/>
</dbReference>
<dbReference type="Pfam" id="PF00571">
    <property type="entry name" value="CBS"/>
    <property type="match status" value="2"/>
</dbReference>
<dbReference type="Pfam" id="PF00478">
    <property type="entry name" value="IMPDH"/>
    <property type="match status" value="1"/>
</dbReference>
<dbReference type="PIRSF" id="PIRSF000130">
    <property type="entry name" value="IMPDH"/>
    <property type="match status" value="1"/>
</dbReference>
<dbReference type="SMART" id="SM00116">
    <property type="entry name" value="CBS"/>
    <property type="match status" value="2"/>
</dbReference>
<dbReference type="SMART" id="SM01240">
    <property type="entry name" value="IMPDH"/>
    <property type="match status" value="1"/>
</dbReference>
<dbReference type="SUPFAM" id="SSF51412">
    <property type="entry name" value="Inosine monophosphate dehydrogenase (IMPDH)"/>
    <property type="match status" value="2"/>
</dbReference>
<dbReference type="PROSITE" id="PS51371">
    <property type="entry name" value="CBS"/>
    <property type="match status" value="2"/>
</dbReference>
<dbReference type="PROSITE" id="PS00487">
    <property type="entry name" value="IMP_DH_GMP_RED"/>
    <property type="match status" value="1"/>
</dbReference>
<comment type="function">
    <text evidence="3">Catalyzes the conversion of inosine 5'-phosphate (IMP) to xanthosine 5'-phosphate (XMP), the first committed and rate-limiting step in the de novo synthesis of guanine nucleotides, and therefore plays an important role in the regulation of cell growth. Could also have a single-stranded nucleic acid-binding activity and could play a role in RNA and/or DNA metabolism. It may also have a role in the development of malignancy and the growth progression of some tumors.</text>
</comment>
<comment type="catalytic activity">
    <reaction evidence="3">
        <text>IMP + NAD(+) + H2O = XMP + NADH + H(+)</text>
        <dbReference type="Rhea" id="RHEA:11708"/>
        <dbReference type="ChEBI" id="CHEBI:15377"/>
        <dbReference type="ChEBI" id="CHEBI:15378"/>
        <dbReference type="ChEBI" id="CHEBI:57464"/>
        <dbReference type="ChEBI" id="CHEBI:57540"/>
        <dbReference type="ChEBI" id="CHEBI:57945"/>
        <dbReference type="ChEBI" id="CHEBI:58053"/>
        <dbReference type="EC" id="1.1.1.205"/>
    </reaction>
</comment>
<comment type="cofactor">
    <cofactor evidence="3">
        <name>K(+)</name>
        <dbReference type="ChEBI" id="CHEBI:29103"/>
    </cofactor>
</comment>
<comment type="activity regulation">
    <text evidence="3">Mycophenolic acid (MPA) is a non-competitive inhibitor that prevents formation of the closed enzyme conformation by binding to the same site as the amobile flap. In contrast, mizoribine monophosphate (MZP) is a competitive inhibitor that induces the closed conformation. MPA is a potent inhibitor of mammalian IMPDHs but a poor inhibitor of the bacterial enzymes. MZP is a more potent inhibitor of bacterial IMPDH.</text>
</comment>
<comment type="pathway">
    <text evidence="3">Purine metabolism; XMP biosynthesis via de novo pathway; XMP from IMP: step 1/1.</text>
</comment>
<comment type="subunit">
    <text evidence="3">Homotetramer.</text>
</comment>
<comment type="subcellular location">
    <subcellularLocation>
        <location evidence="3">Cytoplasm</location>
    </subcellularLocation>
    <subcellularLocation>
        <location evidence="3">Nucleus</location>
    </subcellularLocation>
</comment>
<comment type="similarity">
    <text evidence="3">Belongs to the IMPDH/GMPR family.</text>
</comment>
<comment type="sequence caution" evidence="4">
    <conflict type="erroneous initiation">
        <sequence resource="EMBL-CDS" id="AAI26585"/>
    </conflict>
    <text>Extended N-terminus.</text>
</comment>
<feature type="chain" id="PRO_0000415672" description="Inosine-5'-monophosphate dehydrogenase 1">
    <location>
        <begin position="1"/>
        <end position="514"/>
    </location>
</feature>
<feature type="domain" description="CBS 1" evidence="3">
    <location>
        <begin position="114"/>
        <end position="173"/>
    </location>
</feature>
<feature type="domain" description="CBS 2" evidence="3">
    <location>
        <begin position="179"/>
        <end position="237"/>
    </location>
</feature>
<feature type="active site" description="Thioimidate intermediate" evidence="3">
    <location>
        <position position="331"/>
    </location>
</feature>
<feature type="active site" description="Proton acceptor" evidence="3">
    <location>
        <position position="429"/>
    </location>
</feature>
<feature type="binding site" evidence="3">
    <location>
        <begin position="274"/>
        <end position="276"/>
    </location>
    <ligand>
        <name>NAD(+)</name>
        <dbReference type="ChEBI" id="CHEBI:57540"/>
    </ligand>
</feature>
<feature type="binding site" evidence="3">
    <location>
        <begin position="324"/>
        <end position="326"/>
    </location>
    <ligand>
        <name>NAD(+)</name>
        <dbReference type="ChEBI" id="CHEBI:57540"/>
    </ligand>
</feature>
<feature type="binding site" description="in other chain" evidence="3">
    <location>
        <position position="326"/>
    </location>
    <ligand>
        <name>K(+)</name>
        <dbReference type="ChEBI" id="CHEBI:29103"/>
        <note>ligand shared between two tetrameric partners</note>
    </ligand>
</feature>
<feature type="binding site" description="in other chain" evidence="3">
    <location>
        <position position="328"/>
    </location>
    <ligand>
        <name>K(+)</name>
        <dbReference type="ChEBI" id="CHEBI:29103"/>
        <note>ligand shared between two tetrameric partners</note>
    </ligand>
</feature>
<feature type="binding site" evidence="3">
    <location>
        <position position="329"/>
    </location>
    <ligand>
        <name>IMP</name>
        <dbReference type="ChEBI" id="CHEBI:58053"/>
    </ligand>
</feature>
<feature type="binding site" description="in other chain" evidence="3">
    <location>
        <position position="331"/>
    </location>
    <ligand>
        <name>K(+)</name>
        <dbReference type="ChEBI" id="CHEBI:29103"/>
        <note>ligand shared between two tetrameric partners</note>
    </ligand>
</feature>
<feature type="binding site" evidence="3">
    <location>
        <begin position="364"/>
        <end position="366"/>
    </location>
    <ligand>
        <name>IMP</name>
        <dbReference type="ChEBI" id="CHEBI:58053"/>
    </ligand>
</feature>
<feature type="binding site" evidence="3">
    <location>
        <begin position="387"/>
        <end position="388"/>
    </location>
    <ligand>
        <name>IMP</name>
        <dbReference type="ChEBI" id="CHEBI:58053"/>
    </ligand>
</feature>
<feature type="binding site" evidence="3">
    <location>
        <begin position="411"/>
        <end position="415"/>
    </location>
    <ligand>
        <name>IMP</name>
        <dbReference type="ChEBI" id="CHEBI:58053"/>
    </ligand>
</feature>
<feature type="binding site" evidence="3">
    <location>
        <position position="441"/>
    </location>
    <ligand>
        <name>IMP</name>
        <dbReference type="ChEBI" id="CHEBI:58053"/>
    </ligand>
</feature>
<feature type="binding site" evidence="3">
    <location>
        <position position="500"/>
    </location>
    <ligand>
        <name>K(+)</name>
        <dbReference type="ChEBI" id="CHEBI:29103"/>
        <note>ligand shared between two tetrameric partners</note>
    </ligand>
</feature>
<feature type="binding site" evidence="3">
    <location>
        <position position="501"/>
    </location>
    <ligand>
        <name>K(+)</name>
        <dbReference type="ChEBI" id="CHEBI:29103"/>
        <note>ligand shared between two tetrameric partners</note>
    </ligand>
</feature>
<feature type="binding site" evidence="3">
    <location>
        <position position="502"/>
    </location>
    <ligand>
        <name>K(+)</name>
        <dbReference type="ChEBI" id="CHEBI:29103"/>
        <note>ligand shared between two tetrameric partners</note>
    </ligand>
</feature>
<feature type="modified residue" description="Phosphoserine" evidence="1">
    <location>
        <position position="160"/>
    </location>
</feature>
<feature type="modified residue" description="Omega-N-methylarginine" evidence="2">
    <location>
        <position position="341"/>
    </location>
</feature>
<feature type="modified residue" description="Omega-N-methylarginine" evidence="2">
    <location>
        <position position="355"/>
    </location>
</feature>
<name>IMDH1_BOVIN</name>
<keyword id="KW-0129">CBS domain</keyword>
<keyword id="KW-0963">Cytoplasm</keyword>
<keyword id="KW-0332">GMP biosynthesis</keyword>
<keyword id="KW-0479">Metal-binding</keyword>
<keyword id="KW-0488">Methylation</keyword>
<keyword id="KW-0520">NAD</keyword>
<keyword id="KW-0539">Nucleus</keyword>
<keyword id="KW-0560">Oxidoreductase</keyword>
<keyword id="KW-0597">Phosphoprotein</keyword>
<keyword id="KW-0630">Potassium</keyword>
<keyword id="KW-0658">Purine biosynthesis</keyword>
<keyword id="KW-1185">Reference proteome</keyword>
<keyword id="KW-0677">Repeat</keyword>
<proteinExistence type="evidence at transcript level"/>
<sequence length="514" mass="55424">MADYLISGGTGYVPEDGLTAQQLFANADGLTYNDFLILPGFIDFTADEVDLTSALTRKITLKTPLISSPMDTVTEADMAIAMALMGGIGFIHHNCTPEFQANEVRKVKKFEQGFITDPVVLSPSHTVGDVLEAKIRHGFSGIPITETGTMGSKLVGIVTSRDIDFLAEKDHTTLLSEVMTPRNELVVAPAGVTLKEANEILQRSKKGKLPIVNDRDELVAIIARTDLKKNRDYPLASKDSHKQLLCGAAVGTREDDKYRLDLLTQAGADVIVLDSSQGNSVYQIAMVHYIKQKYPHLQVIGGNVVTAAQAKNLIDAGVDGLRVGMGCGSICITQEVMACGRPQGTAVYKVAEYARRFGVPVIADGGIQTVGHVVKALALGASTVMMGSLLAATTEAPGEYFFSDGVRLKKYRGMGSLDAMEKSSSSQKRYFSEGDKVKIAQGVSGSIQDKGSIQKFVPYLIAGIQHGCQDIGARSLSVLRSMMYSGELKFEKRTMSAQIEGGVHGLHSYEKRLY</sequence>
<gene>
    <name evidence="3" type="primary">IMPDH1</name>
</gene>
<protein>
    <recommendedName>
        <fullName evidence="3">Inosine-5'-monophosphate dehydrogenase 1</fullName>
        <shortName evidence="3">IMP dehydrogenase 1</shortName>
        <shortName evidence="3">IMPD 1</shortName>
        <shortName evidence="3">IMPDH 1</shortName>
        <ecNumber evidence="3">1.1.1.205</ecNumber>
    </recommendedName>
</protein>
<organism>
    <name type="scientific">Bos taurus</name>
    <name type="common">Bovine</name>
    <dbReference type="NCBI Taxonomy" id="9913"/>
    <lineage>
        <taxon>Eukaryota</taxon>
        <taxon>Metazoa</taxon>
        <taxon>Chordata</taxon>
        <taxon>Craniata</taxon>
        <taxon>Vertebrata</taxon>
        <taxon>Euteleostomi</taxon>
        <taxon>Mammalia</taxon>
        <taxon>Eutheria</taxon>
        <taxon>Laurasiatheria</taxon>
        <taxon>Artiodactyla</taxon>
        <taxon>Ruminantia</taxon>
        <taxon>Pecora</taxon>
        <taxon>Bovidae</taxon>
        <taxon>Bovinae</taxon>
        <taxon>Bos</taxon>
    </lineage>
</organism>
<reference key="1">
    <citation type="journal article" date="2009" name="Genome Biol.">
        <title>A whole-genome assembly of the domestic cow, Bos taurus.</title>
        <authorList>
            <person name="Zimin A.V."/>
            <person name="Delcher A.L."/>
            <person name="Florea L."/>
            <person name="Kelley D.R."/>
            <person name="Schatz M.C."/>
            <person name="Puiu D."/>
            <person name="Hanrahan F."/>
            <person name="Pertea G."/>
            <person name="Van Tassell C.P."/>
            <person name="Sonstegard T.S."/>
            <person name="Marcais G."/>
            <person name="Roberts M."/>
            <person name="Subramanian P."/>
            <person name="Yorke J.A."/>
            <person name="Salzberg S.L."/>
        </authorList>
    </citation>
    <scope>NUCLEOTIDE SEQUENCE [LARGE SCALE GENOMIC DNA]</scope>
    <source>
        <strain>Hereford</strain>
    </source>
</reference>
<reference key="2">
    <citation type="submission" date="2006-10" db="EMBL/GenBank/DDBJ databases">
        <authorList>
            <consortium name="NIH - Mammalian Gene Collection (MGC) project"/>
        </authorList>
    </citation>
    <scope>NUCLEOTIDE SEQUENCE [LARGE SCALE MRNA]</scope>
    <source>
        <strain>Hereford</strain>
        <tissue>Fetal pons</tissue>
    </source>
</reference>